<dbReference type="EC" id="2.1.1.173" evidence="1"/>
<dbReference type="EC" id="2.1.1.264" evidence="1"/>
<dbReference type="EMBL" id="CP000821">
    <property type="protein sequence ID" value="ABV37082.1"/>
    <property type="molecule type" value="Genomic_DNA"/>
</dbReference>
<dbReference type="RefSeq" id="WP_012142815.1">
    <property type="nucleotide sequence ID" value="NC_009831.1"/>
</dbReference>
<dbReference type="SMR" id="A8FW59"/>
<dbReference type="STRING" id="425104.Ssed_2473"/>
<dbReference type="KEGG" id="sse:Ssed_2473"/>
<dbReference type="eggNOG" id="COG0116">
    <property type="taxonomic scope" value="Bacteria"/>
</dbReference>
<dbReference type="eggNOG" id="COG1092">
    <property type="taxonomic scope" value="Bacteria"/>
</dbReference>
<dbReference type="HOGENOM" id="CLU_014042_2_0_6"/>
<dbReference type="OrthoDB" id="9809404at2"/>
<dbReference type="Proteomes" id="UP000002015">
    <property type="component" value="Chromosome"/>
</dbReference>
<dbReference type="GO" id="GO:0005737">
    <property type="term" value="C:cytoplasm"/>
    <property type="evidence" value="ECO:0007669"/>
    <property type="project" value="UniProtKB-SubCell"/>
</dbReference>
<dbReference type="GO" id="GO:0052915">
    <property type="term" value="F:23S rRNA (guanine(2445)-N(2))-methyltransferase activity"/>
    <property type="evidence" value="ECO:0007669"/>
    <property type="project" value="UniProtKB-UniRule"/>
</dbReference>
<dbReference type="GO" id="GO:0003723">
    <property type="term" value="F:RNA binding"/>
    <property type="evidence" value="ECO:0007669"/>
    <property type="project" value="UniProtKB-KW"/>
</dbReference>
<dbReference type="GO" id="GO:0070043">
    <property type="term" value="F:rRNA (guanine-N7-)-methyltransferase activity"/>
    <property type="evidence" value="ECO:0007669"/>
    <property type="project" value="UniProtKB-UniRule"/>
</dbReference>
<dbReference type="CDD" id="cd02440">
    <property type="entry name" value="AdoMet_MTases"/>
    <property type="match status" value="1"/>
</dbReference>
<dbReference type="CDD" id="cd11715">
    <property type="entry name" value="THUMP_AdoMetMT"/>
    <property type="match status" value="1"/>
</dbReference>
<dbReference type="FunFam" id="3.40.50.150:FF:000039">
    <property type="entry name" value="Ribosomal RNA large subunit methyltransferase K/L"/>
    <property type="match status" value="1"/>
</dbReference>
<dbReference type="Gene3D" id="3.30.2130.30">
    <property type="match status" value="1"/>
</dbReference>
<dbReference type="Gene3D" id="3.30.750.80">
    <property type="entry name" value="RNA methyltransferase domain (HRMD) like"/>
    <property type="match status" value="1"/>
</dbReference>
<dbReference type="Gene3D" id="3.40.50.150">
    <property type="entry name" value="Vaccinia Virus protein VP39"/>
    <property type="match status" value="2"/>
</dbReference>
<dbReference type="HAMAP" id="MF_01858">
    <property type="entry name" value="23SrRNA_methyltr_KL"/>
    <property type="match status" value="1"/>
</dbReference>
<dbReference type="InterPro" id="IPR017244">
    <property type="entry name" value="23SrRNA_methyltr_KL"/>
</dbReference>
<dbReference type="InterPro" id="IPR002052">
    <property type="entry name" value="DNA_methylase_N6_adenine_CS"/>
</dbReference>
<dbReference type="InterPro" id="IPR000241">
    <property type="entry name" value="RlmKL-like_Mtase"/>
</dbReference>
<dbReference type="InterPro" id="IPR053943">
    <property type="entry name" value="RlmKL-like_Mtase_CS"/>
</dbReference>
<dbReference type="InterPro" id="IPR054170">
    <property type="entry name" value="RlmL_1st"/>
</dbReference>
<dbReference type="InterPro" id="IPR019614">
    <property type="entry name" value="SAM-dep_methyl-trfase"/>
</dbReference>
<dbReference type="InterPro" id="IPR029063">
    <property type="entry name" value="SAM-dependent_MTases_sf"/>
</dbReference>
<dbReference type="InterPro" id="IPR004114">
    <property type="entry name" value="THUMP_dom"/>
</dbReference>
<dbReference type="NCBIfam" id="NF008748">
    <property type="entry name" value="PRK11783.1"/>
    <property type="match status" value="1"/>
</dbReference>
<dbReference type="PANTHER" id="PTHR47313">
    <property type="entry name" value="RIBOSOMAL RNA LARGE SUBUNIT METHYLTRANSFERASE K/L"/>
    <property type="match status" value="1"/>
</dbReference>
<dbReference type="PANTHER" id="PTHR47313:SF1">
    <property type="entry name" value="RIBOSOMAL RNA LARGE SUBUNIT METHYLTRANSFERASE K_L"/>
    <property type="match status" value="1"/>
</dbReference>
<dbReference type="Pfam" id="PF10672">
    <property type="entry name" value="Methyltrans_SAM"/>
    <property type="match status" value="1"/>
</dbReference>
<dbReference type="Pfam" id="PF22020">
    <property type="entry name" value="RlmL_1st"/>
    <property type="match status" value="1"/>
</dbReference>
<dbReference type="Pfam" id="PF02926">
    <property type="entry name" value="THUMP"/>
    <property type="match status" value="1"/>
</dbReference>
<dbReference type="Pfam" id="PF01170">
    <property type="entry name" value="UPF0020"/>
    <property type="match status" value="1"/>
</dbReference>
<dbReference type="PIRSF" id="PIRSF037618">
    <property type="entry name" value="RNA_Mtase_bacteria_prd"/>
    <property type="match status" value="1"/>
</dbReference>
<dbReference type="SMART" id="SM00981">
    <property type="entry name" value="THUMP"/>
    <property type="match status" value="1"/>
</dbReference>
<dbReference type="SUPFAM" id="SSF53335">
    <property type="entry name" value="S-adenosyl-L-methionine-dependent methyltransferases"/>
    <property type="match status" value="2"/>
</dbReference>
<dbReference type="PROSITE" id="PS51165">
    <property type="entry name" value="THUMP"/>
    <property type="match status" value="1"/>
</dbReference>
<dbReference type="PROSITE" id="PS01261">
    <property type="entry name" value="UPF0020"/>
    <property type="match status" value="1"/>
</dbReference>
<gene>
    <name evidence="1" type="primary">rlmL</name>
    <name type="ordered locus">Ssed_2473</name>
</gene>
<sequence length="711" mass="80269">MLNFFAAAPRGYEYALSLELADLGASEIKESVAGVYFSASLELGYRITLWSRIASRIILVIHKGPCESPEQLYNAAYGIDWQMEFNHRSTFSIDFHGMGGFINNTMFGALKIKDAIVDRFRDDDCPRPDVARVDADFRIDAHYRRGQITIGLNFSGPALHKRGYRSTTGEAPLKENLAANMLVRSGWQKTPVTLMDPFCGSGTILIEAAMIACDMAPGLHRERFGFEHWHRHNDKVWQGLLDEAKARASIGKTRCTTKFYGSDIDSRLVALAKRNAENAGVLDLIEFDVSNALNVKVPGESGYLISNPPYGERLGTVTALLQLYYQLGDKFKAEFGGWNLAILNSDVELLSALKLKADKQMKMNNGALECAFNLYTVHAENTRRVDPSKINRDGDVSDIAVPFANRVKKNFKQLQKWAKKEGVDSYRIYDADLPDYKVAIDKYLDYVVIQEYTAPVDIPESVTKRRLTDVLITLPSAIGIDPENIILKTRERQKGTNQYEKIQANKLELITTEYGAKFKLNLKEYLDTGLFLDHRLTRKLVGQKSKDKDVLNLFAYTGTASVHAALGGAKSVKTVDMSNTYTNWAKENFALNGLNDDKYQFVQANCMQWIKTTHDKFDLIFIDPPTFSNSKRMEDSFDVLRDHVALLSSLIKLLNPGGEIIFSNNKRKFKMEIEALEALNFTVKNIDNQTLPLDFKRNPQIHNTWLLTHAE</sequence>
<accession>A8FW59</accession>
<evidence type="ECO:0000255" key="1">
    <source>
        <dbReference type="HAMAP-Rule" id="MF_01858"/>
    </source>
</evidence>
<keyword id="KW-0963">Cytoplasm</keyword>
<keyword id="KW-0489">Methyltransferase</keyword>
<keyword id="KW-1185">Reference proteome</keyword>
<keyword id="KW-0694">RNA-binding</keyword>
<keyword id="KW-0698">rRNA processing</keyword>
<keyword id="KW-0949">S-adenosyl-L-methionine</keyword>
<keyword id="KW-0808">Transferase</keyword>
<proteinExistence type="inferred from homology"/>
<organism>
    <name type="scientific">Shewanella sediminis (strain HAW-EB3)</name>
    <dbReference type="NCBI Taxonomy" id="425104"/>
    <lineage>
        <taxon>Bacteria</taxon>
        <taxon>Pseudomonadati</taxon>
        <taxon>Pseudomonadota</taxon>
        <taxon>Gammaproteobacteria</taxon>
        <taxon>Alteromonadales</taxon>
        <taxon>Shewanellaceae</taxon>
        <taxon>Shewanella</taxon>
    </lineage>
</organism>
<comment type="function">
    <text evidence="1">Specifically methylates the guanine in position 2445 (m2G2445) and the guanine in position 2069 (m7G2069) of 23S rRNA.</text>
</comment>
<comment type="catalytic activity">
    <reaction evidence="1">
        <text>guanosine(2445) in 23S rRNA + S-adenosyl-L-methionine = N(2)-methylguanosine(2445) in 23S rRNA + S-adenosyl-L-homocysteine + H(+)</text>
        <dbReference type="Rhea" id="RHEA:42740"/>
        <dbReference type="Rhea" id="RHEA-COMP:10215"/>
        <dbReference type="Rhea" id="RHEA-COMP:10216"/>
        <dbReference type="ChEBI" id="CHEBI:15378"/>
        <dbReference type="ChEBI" id="CHEBI:57856"/>
        <dbReference type="ChEBI" id="CHEBI:59789"/>
        <dbReference type="ChEBI" id="CHEBI:74269"/>
        <dbReference type="ChEBI" id="CHEBI:74481"/>
        <dbReference type="EC" id="2.1.1.173"/>
    </reaction>
</comment>
<comment type="catalytic activity">
    <reaction evidence="1">
        <text>guanosine(2069) in 23S rRNA + S-adenosyl-L-methionine = N(2)-methylguanosine(2069) in 23S rRNA + S-adenosyl-L-homocysteine + H(+)</text>
        <dbReference type="Rhea" id="RHEA:43772"/>
        <dbReference type="Rhea" id="RHEA-COMP:10688"/>
        <dbReference type="Rhea" id="RHEA-COMP:10689"/>
        <dbReference type="ChEBI" id="CHEBI:15378"/>
        <dbReference type="ChEBI" id="CHEBI:57856"/>
        <dbReference type="ChEBI" id="CHEBI:59789"/>
        <dbReference type="ChEBI" id="CHEBI:74269"/>
        <dbReference type="ChEBI" id="CHEBI:74481"/>
        <dbReference type="EC" id="2.1.1.264"/>
    </reaction>
</comment>
<comment type="subcellular location">
    <subcellularLocation>
        <location evidence="1">Cytoplasm</location>
    </subcellularLocation>
</comment>
<comment type="similarity">
    <text evidence="1">Belongs to the methyltransferase superfamily. RlmKL family.</text>
</comment>
<protein>
    <recommendedName>
        <fullName evidence="1">Ribosomal RNA large subunit methyltransferase K/L</fullName>
    </recommendedName>
    <domain>
        <recommendedName>
            <fullName evidence="1">23S rRNA m2G2445 methyltransferase</fullName>
            <ecNumber evidence="1">2.1.1.173</ecNumber>
        </recommendedName>
        <alternativeName>
            <fullName evidence="1">rRNA (guanine-N(2)-)-methyltransferase RlmL</fullName>
        </alternativeName>
    </domain>
    <domain>
        <recommendedName>
            <fullName evidence="1">23S rRNA m7G2069 methyltransferase</fullName>
            <ecNumber evidence="1">2.1.1.264</ecNumber>
        </recommendedName>
        <alternativeName>
            <fullName evidence="1">rRNA (guanine-N(7)-)-methyltransferase RlmK</fullName>
        </alternativeName>
    </domain>
</protein>
<feature type="chain" id="PRO_0000366830" description="Ribosomal RNA large subunit methyltransferase K/L">
    <location>
        <begin position="1"/>
        <end position="711"/>
    </location>
</feature>
<feature type="domain" description="THUMP" evidence="1">
    <location>
        <begin position="43"/>
        <end position="154"/>
    </location>
</feature>
<name>RLMKL_SHESH</name>
<reference key="1">
    <citation type="submission" date="2007-08" db="EMBL/GenBank/DDBJ databases">
        <title>Complete sequence of Shewanella sediminis HAW-EB3.</title>
        <authorList>
            <consortium name="US DOE Joint Genome Institute"/>
            <person name="Copeland A."/>
            <person name="Lucas S."/>
            <person name="Lapidus A."/>
            <person name="Barry K."/>
            <person name="Glavina del Rio T."/>
            <person name="Dalin E."/>
            <person name="Tice H."/>
            <person name="Pitluck S."/>
            <person name="Chertkov O."/>
            <person name="Brettin T."/>
            <person name="Bruce D."/>
            <person name="Detter J.C."/>
            <person name="Han C."/>
            <person name="Schmutz J."/>
            <person name="Larimer F."/>
            <person name="Land M."/>
            <person name="Hauser L."/>
            <person name="Kyrpides N."/>
            <person name="Kim E."/>
            <person name="Zhao J.-S."/>
            <person name="Richardson P."/>
        </authorList>
    </citation>
    <scope>NUCLEOTIDE SEQUENCE [LARGE SCALE GENOMIC DNA]</scope>
    <source>
        <strain>HAW-EB3</strain>
    </source>
</reference>